<dbReference type="EC" id="2.7.7.56" evidence="1"/>
<dbReference type="EMBL" id="AE014299">
    <property type="protein sequence ID" value="AAN57227.1"/>
    <property type="molecule type" value="Genomic_DNA"/>
</dbReference>
<dbReference type="RefSeq" id="NP_719783.1">
    <property type="nucleotide sequence ID" value="NC_004347.2"/>
</dbReference>
<dbReference type="RefSeq" id="WP_011073930.1">
    <property type="nucleotide sequence ID" value="NZ_CP053946.1"/>
</dbReference>
<dbReference type="SMR" id="Q8E9L4"/>
<dbReference type="STRING" id="211586.SO_4256"/>
<dbReference type="PaxDb" id="211586-SO_4256"/>
<dbReference type="GeneID" id="75187079"/>
<dbReference type="KEGG" id="son:SO_4256"/>
<dbReference type="PATRIC" id="fig|211586.12.peg.4115"/>
<dbReference type="eggNOG" id="COG0689">
    <property type="taxonomic scope" value="Bacteria"/>
</dbReference>
<dbReference type="HOGENOM" id="CLU_050858_0_0_6"/>
<dbReference type="OrthoDB" id="9802265at2"/>
<dbReference type="PhylomeDB" id="Q8E9L4"/>
<dbReference type="BioCyc" id="SONE211586:G1GMP-3931-MONOMER"/>
<dbReference type="Proteomes" id="UP000008186">
    <property type="component" value="Chromosome"/>
</dbReference>
<dbReference type="GO" id="GO:0000175">
    <property type="term" value="F:3'-5'-RNA exonuclease activity"/>
    <property type="evidence" value="ECO:0007669"/>
    <property type="project" value="UniProtKB-UniRule"/>
</dbReference>
<dbReference type="GO" id="GO:0003723">
    <property type="term" value="F:RNA binding"/>
    <property type="evidence" value="ECO:0000318"/>
    <property type="project" value="GO_Central"/>
</dbReference>
<dbReference type="GO" id="GO:0000049">
    <property type="term" value="F:tRNA binding"/>
    <property type="evidence" value="ECO:0007669"/>
    <property type="project" value="UniProtKB-UniRule"/>
</dbReference>
<dbReference type="GO" id="GO:0009022">
    <property type="term" value="F:tRNA nucleotidyltransferase activity"/>
    <property type="evidence" value="ECO:0007669"/>
    <property type="project" value="UniProtKB-UniRule"/>
</dbReference>
<dbReference type="GO" id="GO:0016075">
    <property type="term" value="P:rRNA catabolic process"/>
    <property type="evidence" value="ECO:0000318"/>
    <property type="project" value="GO_Central"/>
</dbReference>
<dbReference type="GO" id="GO:0006364">
    <property type="term" value="P:rRNA processing"/>
    <property type="evidence" value="ECO:0007669"/>
    <property type="project" value="UniProtKB-KW"/>
</dbReference>
<dbReference type="GO" id="GO:0008033">
    <property type="term" value="P:tRNA processing"/>
    <property type="evidence" value="ECO:0007669"/>
    <property type="project" value="UniProtKB-UniRule"/>
</dbReference>
<dbReference type="CDD" id="cd11362">
    <property type="entry name" value="RNase_PH_bact"/>
    <property type="match status" value="1"/>
</dbReference>
<dbReference type="FunFam" id="3.30.230.70:FF:000003">
    <property type="entry name" value="Ribonuclease PH"/>
    <property type="match status" value="1"/>
</dbReference>
<dbReference type="Gene3D" id="3.30.230.70">
    <property type="entry name" value="GHMP Kinase, N-terminal domain"/>
    <property type="match status" value="1"/>
</dbReference>
<dbReference type="HAMAP" id="MF_00564">
    <property type="entry name" value="RNase_PH"/>
    <property type="match status" value="1"/>
</dbReference>
<dbReference type="InterPro" id="IPR001247">
    <property type="entry name" value="ExoRNase_PH_dom1"/>
</dbReference>
<dbReference type="InterPro" id="IPR015847">
    <property type="entry name" value="ExoRNase_PH_dom2"/>
</dbReference>
<dbReference type="InterPro" id="IPR036345">
    <property type="entry name" value="ExoRNase_PH_dom2_sf"/>
</dbReference>
<dbReference type="InterPro" id="IPR027408">
    <property type="entry name" value="PNPase/RNase_PH_dom_sf"/>
</dbReference>
<dbReference type="InterPro" id="IPR020568">
    <property type="entry name" value="Ribosomal_Su5_D2-typ_SF"/>
</dbReference>
<dbReference type="InterPro" id="IPR050080">
    <property type="entry name" value="RNase_PH"/>
</dbReference>
<dbReference type="InterPro" id="IPR002381">
    <property type="entry name" value="RNase_PH_bac-type"/>
</dbReference>
<dbReference type="InterPro" id="IPR018336">
    <property type="entry name" value="RNase_PH_CS"/>
</dbReference>
<dbReference type="NCBIfam" id="TIGR01966">
    <property type="entry name" value="RNasePH"/>
    <property type="match status" value="1"/>
</dbReference>
<dbReference type="PANTHER" id="PTHR11953">
    <property type="entry name" value="EXOSOME COMPLEX COMPONENT"/>
    <property type="match status" value="1"/>
</dbReference>
<dbReference type="PANTHER" id="PTHR11953:SF0">
    <property type="entry name" value="EXOSOME COMPLEX COMPONENT RRP41"/>
    <property type="match status" value="1"/>
</dbReference>
<dbReference type="Pfam" id="PF01138">
    <property type="entry name" value="RNase_PH"/>
    <property type="match status" value="1"/>
</dbReference>
<dbReference type="Pfam" id="PF03725">
    <property type="entry name" value="RNase_PH_C"/>
    <property type="match status" value="1"/>
</dbReference>
<dbReference type="SUPFAM" id="SSF55666">
    <property type="entry name" value="Ribonuclease PH domain 2-like"/>
    <property type="match status" value="1"/>
</dbReference>
<dbReference type="SUPFAM" id="SSF54211">
    <property type="entry name" value="Ribosomal protein S5 domain 2-like"/>
    <property type="match status" value="1"/>
</dbReference>
<dbReference type="PROSITE" id="PS01277">
    <property type="entry name" value="RIBONUCLEASE_PH"/>
    <property type="match status" value="1"/>
</dbReference>
<protein>
    <recommendedName>
        <fullName evidence="1">Ribonuclease PH</fullName>
        <shortName evidence="1">RNase PH</shortName>
        <ecNumber evidence="1">2.7.7.56</ecNumber>
    </recommendedName>
    <alternativeName>
        <fullName evidence="1">tRNA nucleotidyltransferase</fullName>
    </alternativeName>
</protein>
<organism>
    <name type="scientific">Shewanella oneidensis (strain ATCC 700550 / JCM 31522 / CIP 106686 / LMG 19005 / NCIMB 14063 / MR-1)</name>
    <dbReference type="NCBI Taxonomy" id="211586"/>
    <lineage>
        <taxon>Bacteria</taxon>
        <taxon>Pseudomonadati</taxon>
        <taxon>Pseudomonadota</taxon>
        <taxon>Gammaproteobacteria</taxon>
        <taxon>Alteromonadales</taxon>
        <taxon>Shewanellaceae</taxon>
        <taxon>Shewanella</taxon>
    </lineage>
</organism>
<gene>
    <name evidence="1" type="primary">rph</name>
    <name type="ordered locus">SO_4256</name>
</gene>
<keyword id="KW-0548">Nucleotidyltransferase</keyword>
<keyword id="KW-1185">Reference proteome</keyword>
<keyword id="KW-0694">RNA-binding</keyword>
<keyword id="KW-0698">rRNA processing</keyword>
<keyword id="KW-0808">Transferase</keyword>
<keyword id="KW-0819">tRNA processing</keyword>
<keyword id="KW-0820">tRNA-binding</keyword>
<reference key="1">
    <citation type="journal article" date="2002" name="Nat. Biotechnol.">
        <title>Genome sequence of the dissimilatory metal ion-reducing bacterium Shewanella oneidensis.</title>
        <authorList>
            <person name="Heidelberg J.F."/>
            <person name="Paulsen I.T."/>
            <person name="Nelson K.E."/>
            <person name="Gaidos E.J."/>
            <person name="Nelson W.C."/>
            <person name="Read T.D."/>
            <person name="Eisen J.A."/>
            <person name="Seshadri R."/>
            <person name="Ward N.L."/>
            <person name="Methe B.A."/>
            <person name="Clayton R.A."/>
            <person name="Meyer T."/>
            <person name="Tsapin A."/>
            <person name="Scott J."/>
            <person name="Beanan M.J."/>
            <person name="Brinkac L.M."/>
            <person name="Daugherty S.C."/>
            <person name="DeBoy R.T."/>
            <person name="Dodson R.J."/>
            <person name="Durkin A.S."/>
            <person name="Haft D.H."/>
            <person name="Kolonay J.F."/>
            <person name="Madupu R."/>
            <person name="Peterson J.D."/>
            <person name="Umayam L.A."/>
            <person name="White O."/>
            <person name="Wolf A.M."/>
            <person name="Vamathevan J.J."/>
            <person name="Weidman J.F."/>
            <person name="Impraim M."/>
            <person name="Lee K."/>
            <person name="Berry K.J."/>
            <person name="Lee C."/>
            <person name="Mueller J."/>
            <person name="Khouri H.M."/>
            <person name="Gill J."/>
            <person name="Utterback T.R."/>
            <person name="McDonald L.A."/>
            <person name="Feldblyum T.V."/>
            <person name="Smith H.O."/>
            <person name="Venter J.C."/>
            <person name="Nealson K.H."/>
            <person name="Fraser C.M."/>
        </authorList>
    </citation>
    <scope>NUCLEOTIDE SEQUENCE [LARGE SCALE GENOMIC DNA]</scope>
    <source>
        <strain>ATCC 700550 / JCM 31522 / CIP 106686 / LMG 19005 / NCIMB 14063 / MR-1</strain>
    </source>
</reference>
<evidence type="ECO:0000255" key="1">
    <source>
        <dbReference type="HAMAP-Rule" id="MF_00564"/>
    </source>
</evidence>
<name>RNPH_SHEON</name>
<sequence length="237" mass="25620">MRPSNRTPAQTRPITITRQFTAHAEGSVLVEFGETKVLCTASFTEGVPRFLKGQGQGWVTAEYGMLPRSTHSRMDREAARGKQSGRTQEIQRLIGRALRACVDMKALGENTIVIDCDVIQADGGTRTASITGACVALVDALNWARGKGIIKSNPLKFLIAAVSVGIYNGEAISDLEYVEDSAAETDMNVVMTETGKIIEIQGTAEGEPFTHEELIELLGLAKNSIREIVDVQKAALN</sequence>
<proteinExistence type="inferred from homology"/>
<feature type="chain" id="PRO_0000139936" description="Ribonuclease PH">
    <location>
        <begin position="1"/>
        <end position="237"/>
    </location>
</feature>
<feature type="binding site" evidence="1">
    <location>
        <position position="86"/>
    </location>
    <ligand>
        <name>phosphate</name>
        <dbReference type="ChEBI" id="CHEBI:43474"/>
        <note>substrate</note>
    </ligand>
</feature>
<feature type="binding site" evidence="1">
    <location>
        <begin position="124"/>
        <end position="126"/>
    </location>
    <ligand>
        <name>phosphate</name>
        <dbReference type="ChEBI" id="CHEBI:43474"/>
        <note>substrate</note>
    </ligand>
</feature>
<accession>Q8E9L4</accession>
<comment type="function">
    <text evidence="1">Phosphorolytic 3'-5' exoribonuclease that plays an important role in tRNA 3'-end maturation. Removes nucleotide residues following the 3'-CCA terminus of tRNAs; can also add nucleotides to the ends of RNA molecules by using nucleoside diphosphates as substrates, but this may not be physiologically important. Probably plays a role in initiation of 16S rRNA degradation (leading to ribosome degradation) during starvation.</text>
</comment>
<comment type="catalytic activity">
    <reaction evidence="1">
        <text>tRNA(n+1) + phosphate = tRNA(n) + a ribonucleoside 5'-diphosphate</text>
        <dbReference type="Rhea" id="RHEA:10628"/>
        <dbReference type="Rhea" id="RHEA-COMP:17343"/>
        <dbReference type="Rhea" id="RHEA-COMP:17344"/>
        <dbReference type="ChEBI" id="CHEBI:43474"/>
        <dbReference type="ChEBI" id="CHEBI:57930"/>
        <dbReference type="ChEBI" id="CHEBI:173114"/>
        <dbReference type="EC" id="2.7.7.56"/>
    </reaction>
</comment>
<comment type="subunit">
    <text evidence="1">Homohexameric ring arranged as a trimer of dimers.</text>
</comment>
<comment type="similarity">
    <text evidence="1">Belongs to the RNase PH family.</text>
</comment>